<reference key="1">
    <citation type="journal article" date="2006" name="J. Bacteriol.">
        <title>Complete genome sequence of Yersinia pestis strains Antiqua and Nepal516: evidence of gene reduction in an emerging pathogen.</title>
        <authorList>
            <person name="Chain P.S.G."/>
            <person name="Hu P."/>
            <person name="Malfatti S.A."/>
            <person name="Radnedge L."/>
            <person name="Larimer F."/>
            <person name="Vergez L.M."/>
            <person name="Worsham P."/>
            <person name="Chu M.C."/>
            <person name="Andersen G.L."/>
        </authorList>
    </citation>
    <scope>NUCLEOTIDE SEQUENCE [LARGE SCALE GENOMIC DNA]</scope>
    <source>
        <strain>Nepal516</strain>
    </source>
</reference>
<reference key="2">
    <citation type="submission" date="2009-04" db="EMBL/GenBank/DDBJ databases">
        <title>Yersinia pestis Nepal516A whole genome shotgun sequencing project.</title>
        <authorList>
            <person name="Plunkett G. III"/>
            <person name="Anderson B.D."/>
            <person name="Baumler D.J."/>
            <person name="Burland V."/>
            <person name="Cabot E.L."/>
            <person name="Glasner J.D."/>
            <person name="Mau B."/>
            <person name="Neeno-Eckwall E."/>
            <person name="Perna N.T."/>
            <person name="Munk A.C."/>
            <person name="Tapia R."/>
            <person name="Green L.D."/>
            <person name="Rogers Y.C."/>
            <person name="Detter J.C."/>
            <person name="Bruce D.C."/>
            <person name="Brettin T.S."/>
        </authorList>
    </citation>
    <scope>NUCLEOTIDE SEQUENCE [LARGE SCALE GENOMIC DNA]</scope>
    <source>
        <strain>Nepal516</strain>
    </source>
</reference>
<name>Y1556_YERPN</name>
<sequence>MLCAIYRSPKRDQTYLYIEKKDDFSRVPAELLASFGKPQFAMLLALNERKTLATADVEKVKNALIEQGFYLQVPPPPESLLKMHLGETKA</sequence>
<feature type="chain" id="PRO_0000375415" description="YcgL domain-containing protein YPN_1556">
    <location>
        <begin position="1"/>
        <end position="90"/>
    </location>
</feature>
<feature type="domain" description="YcgL" evidence="1">
    <location>
        <begin position="1"/>
        <end position="85"/>
    </location>
</feature>
<gene>
    <name type="ordered locus">YPN_1556</name>
    <name type="ORF">YP516_1729</name>
</gene>
<organism>
    <name type="scientific">Yersinia pestis bv. Antiqua (strain Nepal516)</name>
    <dbReference type="NCBI Taxonomy" id="377628"/>
    <lineage>
        <taxon>Bacteria</taxon>
        <taxon>Pseudomonadati</taxon>
        <taxon>Pseudomonadota</taxon>
        <taxon>Gammaproteobacteria</taxon>
        <taxon>Enterobacterales</taxon>
        <taxon>Yersiniaceae</taxon>
        <taxon>Yersinia</taxon>
    </lineage>
</organism>
<evidence type="ECO:0000255" key="1">
    <source>
        <dbReference type="HAMAP-Rule" id="MF_01866"/>
    </source>
</evidence>
<proteinExistence type="inferred from homology"/>
<protein>
    <recommendedName>
        <fullName evidence="1">YcgL domain-containing protein YPN_1556</fullName>
    </recommendedName>
</protein>
<accession>Q1CJE4</accession>
<accession>C4GSI7</accession>
<dbReference type="EMBL" id="CP000305">
    <property type="protein sequence ID" value="ABG17886.1"/>
    <property type="molecule type" value="Genomic_DNA"/>
</dbReference>
<dbReference type="EMBL" id="ACNQ01000009">
    <property type="protein sequence ID" value="EEO76997.1"/>
    <property type="molecule type" value="Genomic_DNA"/>
</dbReference>
<dbReference type="RefSeq" id="WP_002211743.1">
    <property type="nucleotide sequence ID" value="NZ_ACNQ01000009.1"/>
</dbReference>
<dbReference type="SMR" id="Q1CJE4"/>
<dbReference type="KEGG" id="ypn:YPN_1556"/>
<dbReference type="HOGENOM" id="CLU_155118_1_0_6"/>
<dbReference type="Proteomes" id="UP000008936">
    <property type="component" value="Chromosome"/>
</dbReference>
<dbReference type="Gene3D" id="3.10.510.20">
    <property type="entry name" value="YcgL domain"/>
    <property type="match status" value="1"/>
</dbReference>
<dbReference type="HAMAP" id="MF_01866">
    <property type="entry name" value="UPF0745"/>
    <property type="match status" value="1"/>
</dbReference>
<dbReference type="InterPro" id="IPR038068">
    <property type="entry name" value="YcgL-like_sf"/>
</dbReference>
<dbReference type="InterPro" id="IPR027354">
    <property type="entry name" value="YcgL_dom"/>
</dbReference>
<dbReference type="PANTHER" id="PTHR38109">
    <property type="entry name" value="PROTEIN YCGL"/>
    <property type="match status" value="1"/>
</dbReference>
<dbReference type="PANTHER" id="PTHR38109:SF1">
    <property type="entry name" value="PROTEIN YCGL"/>
    <property type="match status" value="1"/>
</dbReference>
<dbReference type="Pfam" id="PF05166">
    <property type="entry name" value="YcgL"/>
    <property type="match status" value="1"/>
</dbReference>
<dbReference type="SUPFAM" id="SSF160191">
    <property type="entry name" value="YcgL-like"/>
    <property type="match status" value="1"/>
</dbReference>
<dbReference type="PROSITE" id="PS51648">
    <property type="entry name" value="YCGL"/>
    <property type="match status" value="1"/>
</dbReference>